<proteinExistence type="inferred from homology"/>
<accession>Q3K5T4</accession>
<dbReference type="EC" id="5.2.1.8" evidence="1"/>
<dbReference type="EMBL" id="CP000094">
    <property type="protein sequence ID" value="ABA76870.1"/>
    <property type="molecule type" value="Genomic_DNA"/>
</dbReference>
<dbReference type="SMR" id="Q3K5T4"/>
<dbReference type="KEGG" id="pfo:Pfl01_5133"/>
<dbReference type="eggNOG" id="COG0760">
    <property type="taxonomic scope" value="Bacteria"/>
</dbReference>
<dbReference type="HOGENOM" id="CLU_034646_11_0_6"/>
<dbReference type="Proteomes" id="UP000002704">
    <property type="component" value="Chromosome"/>
</dbReference>
<dbReference type="GO" id="GO:0030288">
    <property type="term" value="C:outer membrane-bounded periplasmic space"/>
    <property type="evidence" value="ECO:0007669"/>
    <property type="project" value="InterPro"/>
</dbReference>
<dbReference type="GO" id="GO:0042277">
    <property type="term" value="F:peptide binding"/>
    <property type="evidence" value="ECO:0007669"/>
    <property type="project" value="InterPro"/>
</dbReference>
<dbReference type="GO" id="GO:0003755">
    <property type="term" value="F:peptidyl-prolyl cis-trans isomerase activity"/>
    <property type="evidence" value="ECO:0007669"/>
    <property type="project" value="UniProtKB-UniRule"/>
</dbReference>
<dbReference type="GO" id="GO:0051082">
    <property type="term" value="F:unfolded protein binding"/>
    <property type="evidence" value="ECO:0007669"/>
    <property type="project" value="UniProtKB-UniRule"/>
</dbReference>
<dbReference type="GO" id="GO:0043165">
    <property type="term" value="P:Gram-negative-bacterium-type cell outer membrane assembly"/>
    <property type="evidence" value="ECO:0007669"/>
    <property type="project" value="InterPro"/>
</dbReference>
<dbReference type="GO" id="GO:0006457">
    <property type="term" value="P:protein folding"/>
    <property type="evidence" value="ECO:0007669"/>
    <property type="project" value="UniProtKB-UniRule"/>
</dbReference>
<dbReference type="GO" id="GO:0050821">
    <property type="term" value="P:protein stabilization"/>
    <property type="evidence" value="ECO:0007669"/>
    <property type="project" value="InterPro"/>
</dbReference>
<dbReference type="Gene3D" id="3.10.50.40">
    <property type="match status" value="2"/>
</dbReference>
<dbReference type="Gene3D" id="1.10.4030.10">
    <property type="entry name" value="Porin chaperone SurA, peptide-binding domain"/>
    <property type="match status" value="1"/>
</dbReference>
<dbReference type="HAMAP" id="MF_01183">
    <property type="entry name" value="Chaperone_SurA"/>
    <property type="match status" value="1"/>
</dbReference>
<dbReference type="InterPro" id="IPR050280">
    <property type="entry name" value="OMP_Chaperone_SurA"/>
</dbReference>
<dbReference type="InterPro" id="IPR046357">
    <property type="entry name" value="PPIase_dom_sf"/>
</dbReference>
<dbReference type="InterPro" id="IPR000297">
    <property type="entry name" value="PPIase_PpiC"/>
</dbReference>
<dbReference type="InterPro" id="IPR023034">
    <property type="entry name" value="PPIase_SurA"/>
</dbReference>
<dbReference type="InterPro" id="IPR015391">
    <property type="entry name" value="SurA_N"/>
</dbReference>
<dbReference type="InterPro" id="IPR027304">
    <property type="entry name" value="Trigger_fact/SurA_dom_sf"/>
</dbReference>
<dbReference type="PANTHER" id="PTHR47637">
    <property type="entry name" value="CHAPERONE SURA"/>
    <property type="match status" value="1"/>
</dbReference>
<dbReference type="PANTHER" id="PTHR47637:SF1">
    <property type="entry name" value="CHAPERONE SURA"/>
    <property type="match status" value="1"/>
</dbReference>
<dbReference type="Pfam" id="PF00639">
    <property type="entry name" value="Rotamase"/>
    <property type="match status" value="1"/>
</dbReference>
<dbReference type="Pfam" id="PF13616">
    <property type="entry name" value="Rotamase_3"/>
    <property type="match status" value="1"/>
</dbReference>
<dbReference type="Pfam" id="PF09312">
    <property type="entry name" value="SurA_N"/>
    <property type="match status" value="1"/>
</dbReference>
<dbReference type="SUPFAM" id="SSF54534">
    <property type="entry name" value="FKBP-like"/>
    <property type="match status" value="2"/>
</dbReference>
<dbReference type="SUPFAM" id="SSF109998">
    <property type="entry name" value="Triger factor/SurA peptide-binding domain-like"/>
    <property type="match status" value="1"/>
</dbReference>
<dbReference type="PROSITE" id="PS50198">
    <property type="entry name" value="PPIC_PPIASE_2"/>
    <property type="match status" value="2"/>
</dbReference>
<reference key="1">
    <citation type="journal article" date="2009" name="Genome Biol.">
        <title>Genomic and genetic analyses of diversity and plant interactions of Pseudomonas fluorescens.</title>
        <authorList>
            <person name="Silby M.W."/>
            <person name="Cerdeno-Tarraga A.M."/>
            <person name="Vernikos G.S."/>
            <person name="Giddens S.R."/>
            <person name="Jackson R.W."/>
            <person name="Preston G.M."/>
            <person name="Zhang X.-X."/>
            <person name="Moon C.D."/>
            <person name="Gehrig S.M."/>
            <person name="Godfrey S.A.C."/>
            <person name="Knight C.G."/>
            <person name="Malone J.G."/>
            <person name="Robinson Z."/>
            <person name="Spiers A.J."/>
            <person name="Harris S."/>
            <person name="Challis G.L."/>
            <person name="Yaxley A.M."/>
            <person name="Harris D."/>
            <person name="Seeger K."/>
            <person name="Murphy L."/>
            <person name="Rutter S."/>
            <person name="Squares R."/>
            <person name="Quail M.A."/>
            <person name="Saunders E."/>
            <person name="Mavromatis K."/>
            <person name="Brettin T.S."/>
            <person name="Bentley S.D."/>
            <person name="Hothersall J."/>
            <person name="Stephens E."/>
            <person name="Thomas C.M."/>
            <person name="Parkhill J."/>
            <person name="Levy S.B."/>
            <person name="Rainey P.B."/>
            <person name="Thomson N.R."/>
        </authorList>
    </citation>
    <scope>NUCLEOTIDE SEQUENCE [LARGE SCALE GENOMIC DNA]</scope>
    <source>
        <strain>Pf0-1</strain>
    </source>
</reference>
<comment type="function">
    <text evidence="1">Chaperone involved in the correct folding and assembly of outer membrane proteins. Recognizes specific patterns of aromatic residues and the orientation of their side chains, which are found more frequently in integral outer membrane proteins. May act in both early periplasmic and late outer membrane-associated steps of protein maturation.</text>
</comment>
<comment type="catalytic activity">
    <reaction evidence="1">
        <text>[protein]-peptidylproline (omega=180) = [protein]-peptidylproline (omega=0)</text>
        <dbReference type="Rhea" id="RHEA:16237"/>
        <dbReference type="Rhea" id="RHEA-COMP:10747"/>
        <dbReference type="Rhea" id="RHEA-COMP:10748"/>
        <dbReference type="ChEBI" id="CHEBI:83833"/>
        <dbReference type="ChEBI" id="CHEBI:83834"/>
        <dbReference type="EC" id="5.2.1.8"/>
    </reaction>
</comment>
<comment type="subcellular location">
    <subcellularLocation>
        <location evidence="1">Periplasm</location>
    </subcellularLocation>
    <text evidence="1">Is capable of associating with the outer membrane.</text>
</comment>
<comment type="domain">
    <text evidence="1">The PPIase activity resides only in the second parvulin domain. The N-terminal region and the C-terminal tail are necessary and sufficient for the chaperone activity of SurA. The PPIase activity is dispensable for SurA to function as a chaperone. The N-terminal region and the C-terminal tail are also required for porin recognition.</text>
</comment>
<evidence type="ECO:0000255" key="1">
    <source>
        <dbReference type="HAMAP-Rule" id="MF_01183"/>
    </source>
</evidence>
<protein>
    <recommendedName>
        <fullName evidence="1">Chaperone SurA</fullName>
    </recommendedName>
    <alternativeName>
        <fullName evidence="1">Peptidyl-prolyl cis-trans isomerase SurA</fullName>
        <shortName evidence="1">PPIase SurA</shortName>
        <ecNumber evidence="1">5.2.1.8</ecNumber>
    </alternativeName>
    <alternativeName>
        <fullName evidence="1">Rotamase SurA</fullName>
    </alternativeName>
</protein>
<organism>
    <name type="scientific">Pseudomonas fluorescens (strain Pf0-1)</name>
    <dbReference type="NCBI Taxonomy" id="205922"/>
    <lineage>
        <taxon>Bacteria</taxon>
        <taxon>Pseudomonadati</taxon>
        <taxon>Pseudomonadota</taxon>
        <taxon>Gammaproteobacteria</taxon>
        <taxon>Pseudomonadales</taxon>
        <taxon>Pseudomonadaceae</taxon>
        <taxon>Pseudomonas</taxon>
    </lineage>
</organism>
<sequence>MLGALFLGTAANAAVQSIDRVVAIVDNDVVMQSQLDQRVHEVQQTIAKRGGGLPPPGVLDQQVLERLIVENLQLQIGERSGIRITDEELNQAVGTIAQRNNMTPEQFRIALSRDGLSYEDAREQIRREMVISRVRQRRVAERIQVSEQEVKNFLASDLGKMQLSEELHLANILIPTPESANSEAIQSAARKAMEVYQQLKQGADFGQMAVANSASDNALEGGDMGWRKAAQLPPPFDRELSSMATGDITQPARTPGGFIILKLLEKRGGESQMRDEVHVRHILVKPSPVRDEAKTKELAQSLYNRIEAGEDFAELAKKYSEDPGSALNGGDLNWIDPNALVPEFRAVMAKSPQGQLSKPFQTQYGWHVLEVLGRRATDSTEQAREQQAMTVLRNRKYDEELQTWLRQIRDEAYVEIKLPGADQAAQ</sequence>
<keyword id="KW-0143">Chaperone</keyword>
<keyword id="KW-0413">Isomerase</keyword>
<keyword id="KW-0574">Periplasm</keyword>
<keyword id="KW-0677">Repeat</keyword>
<keyword id="KW-0697">Rotamase</keyword>
<keyword id="KW-0732">Signal</keyword>
<name>SURA_PSEPF</name>
<feature type="signal peptide" evidence="1">
    <location>
        <begin position="1"/>
        <end position="13"/>
    </location>
</feature>
<feature type="chain" id="PRO_0000270028" description="Chaperone SurA">
    <location>
        <begin position="14"/>
        <end position="426"/>
    </location>
</feature>
<feature type="domain" description="PpiC 1" evidence="1">
    <location>
        <begin position="164"/>
        <end position="265"/>
    </location>
</feature>
<feature type="domain" description="PpiC 2" evidence="1">
    <location>
        <begin position="274"/>
        <end position="373"/>
    </location>
</feature>
<gene>
    <name evidence="1" type="primary">surA</name>
    <name type="ordered locus">Pfl01_5133</name>
</gene>